<dbReference type="EC" id="2.1.3.-" evidence="1"/>
<dbReference type="EMBL" id="CU928161">
    <property type="protein sequence ID" value="CAR03231.1"/>
    <property type="molecule type" value="Genomic_DNA"/>
</dbReference>
<dbReference type="RefSeq" id="WP_000019588.1">
    <property type="nucleotide sequence ID" value="NC_011742.1"/>
</dbReference>
<dbReference type="SMR" id="B7MBS9"/>
<dbReference type="GeneID" id="75202724"/>
<dbReference type="KEGG" id="ecz:ECS88_1928"/>
<dbReference type="HOGENOM" id="CLU_078475_0_0_6"/>
<dbReference type="Proteomes" id="UP000000747">
    <property type="component" value="Chromosome"/>
</dbReference>
<dbReference type="GO" id="GO:0016743">
    <property type="term" value="F:carboxyl- or carbamoyltransferase activity"/>
    <property type="evidence" value="ECO:0007669"/>
    <property type="project" value="UniProtKB-UniRule"/>
</dbReference>
<dbReference type="GO" id="GO:1904047">
    <property type="term" value="F:S-adenosyl-L-methionine binding"/>
    <property type="evidence" value="ECO:0007669"/>
    <property type="project" value="UniProtKB-UniRule"/>
</dbReference>
<dbReference type="GO" id="GO:0002098">
    <property type="term" value="P:tRNA wobble uridine modification"/>
    <property type="evidence" value="ECO:0007669"/>
    <property type="project" value="InterPro"/>
</dbReference>
<dbReference type="CDD" id="cd02440">
    <property type="entry name" value="AdoMet_MTases"/>
    <property type="match status" value="1"/>
</dbReference>
<dbReference type="FunFam" id="3.40.50.150:FF:000030">
    <property type="entry name" value="Carboxy-S-adenosyl-L-methionine synthase"/>
    <property type="match status" value="1"/>
</dbReference>
<dbReference type="Gene3D" id="3.40.50.150">
    <property type="entry name" value="Vaccinia Virus protein VP39"/>
    <property type="match status" value="1"/>
</dbReference>
<dbReference type="HAMAP" id="MF_01589">
    <property type="entry name" value="Cx_SAM_synthase"/>
    <property type="match status" value="1"/>
</dbReference>
<dbReference type="InterPro" id="IPR005271">
    <property type="entry name" value="CmoA"/>
</dbReference>
<dbReference type="InterPro" id="IPR041698">
    <property type="entry name" value="Methyltransf_25"/>
</dbReference>
<dbReference type="InterPro" id="IPR029063">
    <property type="entry name" value="SAM-dependent_MTases_sf"/>
</dbReference>
<dbReference type="NCBIfam" id="TIGR00740">
    <property type="entry name" value="carboxy-S-adenosyl-L-methionine synthase CmoA"/>
    <property type="match status" value="1"/>
</dbReference>
<dbReference type="NCBIfam" id="NF011995">
    <property type="entry name" value="PRK15451.1"/>
    <property type="match status" value="1"/>
</dbReference>
<dbReference type="PANTHER" id="PTHR43861:SF2">
    <property type="entry name" value="CARBOXY-S-ADENOSYL-L-METHIONINE SYNTHASE"/>
    <property type="match status" value="1"/>
</dbReference>
<dbReference type="PANTHER" id="PTHR43861">
    <property type="entry name" value="TRANS-ACONITATE 2-METHYLTRANSFERASE-RELATED"/>
    <property type="match status" value="1"/>
</dbReference>
<dbReference type="Pfam" id="PF13649">
    <property type="entry name" value="Methyltransf_25"/>
    <property type="match status" value="1"/>
</dbReference>
<dbReference type="PIRSF" id="PIRSF006325">
    <property type="entry name" value="MeTrfase_bac"/>
    <property type="match status" value="1"/>
</dbReference>
<dbReference type="SUPFAM" id="SSF53335">
    <property type="entry name" value="S-adenosyl-L-methionine-dependent methyltransferases"/>
    <property type="match status" value="1"/>
</dbReference>
<name>CMOA_ECO45</name>
<proteinExistence type="inferred from homology"/>
<sequence>MSHRDTLFSAPIARLGDWTFDERVAEVFPDMIQRSVPGYSNIISMIGMLAERFVQPGTQVYDLGCSLGAATLSVRRNIHHDNCKIIAIDNSPAMIERCRRHIDAYKAPTPVDVIEGDIRDIAIENASMVVLNFTLQFLEPSERQALLDKIYQGLNPGGALVLSEKFSFEDAKVGELLFNMHHDFKRANGYSELEISQKRSMLENVMLTDSVETHKARLHKAGFEHSELWFQCFNFGSLVALKAEDAA</sequence>
<evidence type="ECO:0000255" key="1">
    <source>
        <dbReference type="HAMAP-Rule" id="MF_01589"/>
    </source>
</evidence>
<accession>B7MBS9</accession>
<comment type="function">
    <text evidence="1">Catalyzes the conversion of S-adenosyl-L-methionine (SAM) to carboxy-S-adenosyl-L-methionine (Cx-SAM).</text>
</comment>
<comment type="catalytic activity">
    <reaction evidence="1">
        <text>prephenate + S-adenosyl-L-methionine = carboxy-S-adenosyl-L-methionine + 3-phenylpyruvate + H2O</text>
        <dbReference type="Rhea" id="RHEA:51692"/>
        <dbReference type="ChEBI" id="CHEBI:15377"/>
        <dbReference type="ChEBI" id="CHEBI:18005"/>
        <dbReference type="ChEBI" id="CHEBI:29934"/>
        <dbReference type="ChEBI" id="CHEBI:59789"/>
        <dbReference type="ChEBI" id="CHEBI:134278"/>
    </reaction>
</comment>
<comment type="subunit">
    <text evidence="1">Homodimer.</text>
</comment>
<comment type="similarity">
    <text evidence="1">Belongs to the class I-like SAM-binding methyltransferase superfamily. Cx-SAM synthase family.</text>
</comment>
<feature type="chain" id="PRO_1000201351" description="Carboxy-S-adenosyl-L-methionine synthase">
    <location>
        <begin position="1"/>
        <end position="247"/>
    </location>
</feature>
<feature type="binding site" evidence="1">
    <location>
        <position position="39"/>
    </location>
    <ligand>
        <name>S-adenosyl-L-methionine</name>
        <dbReference type="ChEBI" id="CHEBI:59789"/>
    </ligand>
</feature>
<feature type="binding site" evidence="1">
    <location>
        <begin position="64"/>
        <end position="66"/>
    </location>
    <ligand>
        <name>S-adenosyl-L-methionine</name>
        <dbReference type="ChEBI" id="CHEBI:59789"/>
    </ligand>
</feature>
<feature type="binding site" evidence="1">
    <location>
        <begin position="89"/>
        <end position="90"/>
    </location>
    <ligand>
        <name>S-adenosyl-L-methionine</name>
        <dbReference type="ChEBI" id="CHEBI:59789"/>
    </ligand>
</feature>
<feature type="binding site" evidence="1">
    <location>
        <begin position="117"/>
        <end position="118"/>
    </location>
    <ligand>
        <name>S-adenosyl-L-methionine</name>
        <dbReference type="ChEBI" id="CHEBI:59789"/>
    </ligand>
</feature>
<feature type="binding site" evidence="1">
    <location>
        <position position="132"/>
    </location>
    <ligand>
        <name>S-adenosyl-L-methionine</name>
        <dbReference type="ChEBI" id="CHEBI:59789"/>
    </ligand>
</feature>
<feature type="binding site" evidence="1">
    <location>
        <position position="199"/>
    </location>
    <ligand>
        <name>S-adenosyl-L-methionine</name>
        <dbReference type="ChEBI" id="CHEBI:59789"/>
    </ligand>
</feature>
<protein>
    <recommendedName>
        <fullName evidence="1">Carboxy-S-adenosyl-L-methionine synthase</fullName>
        <shortName evidence="1">Cx-SAM synthase</shortName>
        <ecNumber evidence="1">2.1.3.-</ecNumber>
    </recommendedName>
</protein>
<organism>
    <name type="scientific">Escherichia coli O45:K1 (strain S88 / ExPEC)</name>
    <dbReference type="NCBI Taxonomy" id="585035"/>
    <lineage>
        <taxon>Bacteria</taxon>
        <taxon>Pseudomonadati</taxon>
        <taxon>Pseudomonadota</taxon>
        <taxon>Gammaproteobacteria</taxon>
        <taxon>Enterobacterales</taxon>
        <taxon>Enterobacteriaceae</taxon>
        <taxon>Escherichia</taxon>
    </lineage>
</organism>
<keyword id="KW-1185">Reference proteome</keyword>
<keyword id="KW-0949">S-adenosyl-L-methionine</keyword>
<keyword id="KW-0808">Transferase</keyword>
<gene>
    <name evidence="1" type="primary">cmoA</name>
    <name type="ordered locus">ECS88_1928</name>
</gene>
<reference key="1">
    <citation type="journal article" date="2009" name="PLoS Genet.">
        <title>Organised genome dynamics in the Escherichia coli species results in highly diverse adaptive paths.</title>
        <authorList>
            <person name="Touchon M."/>
            <person name="Hoede C."/>
            <person name="Tenaillon O."/>
            <person name="Barbe V."/>
            <person name="Baeriswyl S."/>
            <person name="Bidet P."/>
            <person name="Bingen E."/>
            <person name="Bonacorsi S."/>
            <person name="Bouchier C."/>
            <person name="Bouvet O."/>
            <person name="Calteau A."/>
            <person name="Chiapello H."/>
            <person name="Clermont O."/>
            <person name="Cruveiller S."/>
            <person name="Danchin A."/>
            <person name="Diard M."/>
            <person name="Dossat C."/>
            <person name="Karoui M.E."/>
            <person name="Frapy E."/>
            <person name="Garry L."/>
            <person name="Ghigo J.M."/>
            <person name="Gilles A.M."/>
            <person name="Johnson J."/>
            <person name="Le Bouguenec C."/>
            <person name="Lescat M."/>
            <person name="Mangenot S."/>
            <person name="Martinez-Jehanne V."/>
            <person name="Matic I."/>
            <person name="Nassif X."/>
            <person name="Oztas S."/>
            <person name="Petit M.A."/>
            <person name="Pichon C."/>
            <person name="Rouy Z."/>
            <person name="Ruf C.S."/>
            <person name="Schneider D."/>
            <person name="Tourret J."/>
            <person name="Vacherie B."/>
            <person name="Vallenet D."/>
            <person name="Medigue C."/>
            <person name="Rocha E.P.C."/>
            <person name="Denamur E."/>
        </authorList>
    </citation>
    <scope>NUCLEOTIDE SEQUENCE [LARGE SCALE GENOMIC DNA]</scope>
    <source>
        <strain>S88 / ExPEC</strain>
    </source>
</reference>